<reference key="1">
    <citation type="journal article" date="1998" name="Science">
        <title>Genome sequence of the nematode C. elegans: a platform for investigating biology.</title>
        <authorList>
            <consortium name="The C. elegans sequencing consortium"/>
        </authorList>
    </citation>
    <scope>NUCLEOTIDE SEQUENCE [LARGE SCALE GENOMIC DNA]</scope>
    <source>
        <strain>Bristol N2</strain>
    </source>
</reference>
<feature type="chain" id="PRO_0000123518" description="Eukaryotic translation initiation factor 3 subunit E">
    <location>
        <begin position="1"/>
        <end position="432"/>
    </location>
</feature>
<feature type="domain" description="PCI" evidence="2">
    <location>
        <begin position="221"/>
        <end position="401"/>
    </location>
</feature>
<organism>
    <name type="scientific">Caenorhabditis elegans</name>
    <dbReference type="NCBI Taxonomy" id="6239"/>
    <lineage>
        <taxon>Eukaryota</taxon>
        <taxon>Metazoa</taxon>
        <taxon>Ecdysozoa</taxon>
        <taxon>Nematoda</taxon>
        <taxon>Chromadorea</taxon>
        <taxon>Rhabditida</taxon>
        <taxon>Rhabditina</taxon>
        <taxon>Rhabditomorpha</taxon>
        <taxon>Rhabditoidea</taxon>
        <taxon>Rhabditidae</taxon>
        <taxon>Peloderinae</taxon>
        <taxon>Caenorhabditis</taxon>
    </lineage>
</organism>
<evidence type="ECO:0000255" key="1">
    <source>
        <dbReference type="HAMAP-Rule" id="MF_03004"/>
    </source>
</evidence>
<evidence type="ECO:0000255" key="2">
    <source>
        <dbReference type="PROSITE-ProRule" id="PRU01185"/>
    </source>
</evidence>
<gene>
    <name evidence="1" type="primary">eif-3.E</name>
    <name type="ORF">B0511.10</name>
</gene>
<accession>O61820</accession>
<proteinExistence type="inferred from homology"/>
<sequence>MSTFDLTQRMAPFLDLHLIIPLLEFIEPRGIYDEKSLTEMHRQLLTKTNMIDSVIETYNGKPIPAAIEAKKKQIIKERDELKSKVDSVVAILEIPEVKEMMDNNRERDGNVRILEHLTQNHNFTVDMVDTLFKYSKFMYECGNYTVASVCLYYYRNLVNQADPNYLNALYGKLASEILLQEWEHARDDLLKLRAYIDANPFDTEWELVTQRAWLMHWALFVYYNYPKGRDEIIEMFLNQQPYLNAIQVLAPHLLRYLAVAVVTSKSRQKNSLKDLVKVIDIERHSYKDPVTDFLTCLYIKYDFDEAQEMLQKCEEVLSNDFFLTAVLGDFRESARLLIFEMFCRIHQCITIEMLARRLNMSQEEAERWIVDLIRTYRIEGAKIDSKLGQVVMGVKSVSIHEQVMENTKRLTLRAQQIALQLEKGRQDKVKAT</sequence>
<comment type="function">
    <text evidence="1">Component of the eukaryotic translation initiation factor 3 (eIF-3) complex, which is involved in protein synthesis of a specialized repertoire of mRNAs and, together with other initiation factors, stimulates binding of mRNA and methionyl-tRNAi to the 40S ribosome. The eIF-3 complex specifically targets and initiates translation of a subset of mRNAs involved in cell proliferation.</text>
</comment>
<comment type="subunit">
    <text evidence="1">Component of the eukaryotic translation initiation factor 3 (eIF-3) complex.</text>
</comment>
<comment type="subcellular location">
    <subcellularLocation>
        <location evidence="1">Cytoplasm</location>
    </subcellularLocation>
</comment>
<comment type="similarity">
    <text evidence="1">Belongs to the eIF-3 subunit E family.</text>
</comment>
<dbReference type="EMBL" id="FO080219">
    <property type="protein sequence ID" value="CCD62105.1"/>
    <property type="molecule type" value="Genomic_DNA"/>
</dbReference>
<dbReference type="PIR" id="T33118">
    <property type="entry name" value="T33118"/>
</dbReference>
<dbReference type="RefSeq" id="NP_492785.1">
    <property type="nucleotide sequence ID" value="NM_060384.8"/>
</dbReference>
<dbReference type="SMR" id="O61820"/>
<dbReference type="BioGRID" id="38371">
    <property type="interactions" value="17"/>
</dbReference>
<dbReference type="FunCoup" id="O61820">
    <property type="interactions" value="3195"/>
</dbReference>
<dbReference type="IntAct" id="O61820">
    <property type="interactions" value="2"/>
</dbReference>
<dbReference type="STRING" id="6239.B0511.10.1"/>
<dbReference type="PaxDb" id="6239-B0511.10"/>
<dbReference type="PeptideAtlas" id="O61820"/>
<dbReference type="EnsemblMetazoa" id="B0511.10.1">
    <property type="protein sequence ID" value="B0511.10.1"/>
    <property type="gene ID" value="WBGene00001228"/>
</dbReference>
<dbReference type="GeneID" id="172959"/>
<dbReference type="KEGG" id="cel:CELE_B0511.10"/>
<dbReference type="AGR" id="WB:WBGene00001228"/>
<dbReference type="CTD" id="172959"/>
<dbReference type="WormBase" id="B0511.10">
    <property type="protein sequence ID" value="CE17349"/>
    <property type="gene ID" value="WBGene00001228"/>
    <property type="gene designation" value="eif-3.E"/>
</dbReference>
<dbReference type="eggNOG" id="KOG2758">
    <property type="taxonomic scope" value="Eukaryota"/>
</dbReference>
<dbReference type="GeneTree" id="ENSGT00390000002661"/>
<dbReference type="HOGENOM" id="CLU_031132_0_1_1"/>
<dbReference type="InParanoid" id="O61820"/>
<dbReference type="OMA" id="NCPWILR"/>
<dbReference type="OrthoDB" id="417252at2759"/>
<dbReference type="PhylomeDB" id="O61820"/>
<dbReference type="Reactome" id="R-CEL-156827">
    <property type="pathway name" value="L13a-mediated translational silencing of Ceruloplasmin expression"/>
</dbReference>
<dbReference type="Reactome" id="R-CEL-72649">
    <property type="pathway name" value="Translation initiation complex formation"/>
</dbReference>
<dbReference type="Reactome" id="R-CEL-72689">
    <property type="pathway name" value="Formation of a pool of free 40S subunits"/>
</dbReference>
<dbReference type="Reactome" id="R-CEL-72695">
    <property type="pathway name" value="Formation of the ternary complex, and subsequently, the 43S complex"/>
</dbReference>
<dbReference type="Reactome" id="R-CEL-72702">
    <property type="pathway name" value="Ribosomal scanning and start codon recognition"/>
</dbReference>
<dbReference type="PRO" id="PR:O61820"/>
<dbReference type="Proteomes" id="UP000001940">
    <property type="component" value="Chromosome I"/>
</dbReference>
<dbReference type="Bgee" id="WBGene00001228">
    <property type="expression patterns" value="Expressed in adult organism and 4 other cell types or tissues"/>
</dbReference>
<dbReference type="GO" id="GO:0016282">
    <property type="term" value="C:eukaryotic 43S preinitiation complex"/>
    <property type="evidence" value="ECO:0007669"/>
    <property type="project" value="UniProtKB-UniRule"/>
</dbReference>
<dbReference type="GO" id="GO:0033290">
    <property type="term" value="C:eukaryotic 48S preinitiation complex"/>
    <property type="evidence" value="ECO:0007669"/>
    <property type="project" value="UniProtKB-UniRule"/>
</dbReference>
<dbReference type="GO" id="GO:0005852">
    <property type="term" value="C:eukaryotic translation initiation factor 3 complex"/>
    <property type="evidence" value="ECO:0000318"/>
    <property type="project" value="GO_Central"/>
</dbReference>
<dbReference type="GO" id="GO:0071540">
    <property type="term" value="C:eukaryotic translation initiation factor 3 complex, eIF3e"/>
    <property type="evidence" value="ECO:0007669"/>
    <property type="project" value="UniProtKB-UniRule"/>
</dbReference>
<dbReference type="GO" id="GO:0005634">
    <property type="term" value="C:nucleus"/>
    <property type="evidence" value="ECO:0000318"/>
    <property type="project" value="GO_Central"/>
</dbReference>
<dbReference type="GO" id="GO:0003743">
    <property type="term" value="F:translation initiation factor activity"/>
    <property type="evidence" value="ECO:0007669"/>
    <property type="project" value="UniProtKB-UniRule"/>
</dbReference>
<dbReference type="GO" id="GO:0001732">
    <property type="term" value="P:formation of cytoplasmic translation initiation complex"/>
    <property type="evidence" value="ECO:0007669"/>
    <property type="project" value="UniProtKB-UniRule"/>
</dbReference>
<dbReference type="GO" id="GO:0006413">
    <property type="term" value="P:translational initiation"/>
    <property type="evidence" value="ECO:0000318"/>
    <property type="project" value="GO_Central"/>
</dbReference>
<dbReference type="CDD" id="cd21378">
    <property type="entry name" value="eIF3E"/>
    <property type="match status" value="1"/>
</dbReference>
<dbReference type="HAMAP" id="MF_03004">
    <property type="entry name" value="eIF3e"/>
    <property type="match status" value="1"/>
</dbReference>
<dbReference type="InterPro" id="IPR016650">
    <property type="entry name" value="eIF3e"/>
</dbReference>
<dbReference type="InterPro" id="IPR019010">
    <property type="entry name" value="eIF3e_N"/>
</dbReference>
<dbReference type="InterPro" id="IPR000717">
    <property type="entry name" value="PCI_dom"/>
</dbReference>
<dbReference type="InterPro" id="IPR036390">
    <property type="entry name" value="WH_DNA-bd_sf"/>
</dbReference>
<dbReference type="PANTHER" id="PTHR10317">
    <property type="entry name" value="EUKARYOTIC TRANSLATION INITIATION FACTOR 3 SUBUNIT E"/>
    <property type="match status" value="1"/>
</dbReference>
<dbReference type="Pfam" id="PF09440">
    <property type="entry name" value="eIF3_N"/>
    <property type="match status" value="1"/>
</dbReference>
<dbReference type="Pfam" id="PF01399">
    <property type="entry name" value="PCI"/>
    <property type="match status" value="1"/>
</dbReference>
<dbReference type="PIRSF" id="PIRSF016255">
    <property type="entry name" value="eIF3e_su6"/>
    <property type="match status" value="1"/>
</dbReference>
<dbReference type="SMART" id="SM01186">
    <property type="entry name" value="eIF3_N"/>
    <property type="match status" value="1"/>
</dbReference>
<dbReference type="SMART" id="SM00088">
    <property type="entry name" value="PINT"/>
    <property type="match status" value="1"/>
</dbReference>
<dbReference type="SUPFAM" id="SSF46785">
    <property type="entry name" value="Winged helix' DNA-binding domain"/>
    <property type="match status" value="1"/>
</dbReference>
<dbReference type="PROSITE" id="PS50250">
    <property type="entry name" value="PCI"/>
    <property type="match status" value="1"/>
</dbReference>
<protein>
    <recommendedName>
        <fullName evidence="1">Eukaryotic translation initiation factor 3 subunit E</fullName>
        <shortName evidence="1">eIF3e</shortName>
    </recommendedName>
    <alternativeName>
        <fullName evidence="1">Eukaryotic translation initiation factor 3 subunit 6</fullName>
    </alternativeName>
</protein>
<keyword id="KW-0963">Cytoplasm</keyword>
<keyword id="KW-0396">Initiation factor</keyword>
<keyword id="KW-0648">Protein biosynthesis</keyword>
<keyword id="KW-1185">Reference proteome</keyword>
<name>EIF3E_CAEEL</name>